<keyword id="KW-0067">ATP-binding</keyword>
<keyword id="KW-0436">Ligase</keyword>
<keyword id="KW-0547">Nucleotide-binding</keyword>
<keyword id="KW-0648">Protein biosynthesis</keyword>
<feature type="chain" id="PRO_1000016193" description="Aspartyl/glutamyl-tRNA(Asn/Gln) amidotransferase subunit C">
    <location>
        <begin position="1"/>
        <end position="95"/>
    </location>
</feature>
<gene>
    <name evidence="1" type="primary">gatC</name>
    <name type="ordered locus">RPA3111</name>
</gene>
<evidence type="ECO:0000255" key="1">
    <source>
        <dbReference type="HAMAP-Rule" id="MF_00122"/>
    </source>
</evidence>
<accession>Q6N571</accession>
<sequence length="95" mass="10384">MSVDAATVRRIAHLARIAVTEDEVPHLQGELNAMLAFVEQLSEVNVEGVEPMTSVTPMQMKKRADVVNDGEIADQVVANAPSTEDHFFLVPKVVE</sequence>
<proteinExistence type="inferred from homology"/>
<comment type="function">
    <text evidence="1">Allows the formation of correctly charged Asn-tRNA(Asn) or Gln-tRNA(Gln) through the transamidation of misacylated Asp-tRNA(Asn) or Glu-tRNA(Gln) in organisms which lack either or both of asparaginyl-tRNA or glutaminyl-tRNA synthetases. The reaction takes place in the presence of glutamine and ATP through an activated phospho-Asp-tRNA(Asn) or phospho-Glu-tRNA(Gln).</text>
</comment>
<comment type="catalytic activity">
    <reaction evidence="1">
        <text>L-glutamyl-tRNA(Gln) + L-glutamine + ATP + H2O = L-glutaminyl-tRNA(Gln) + L-glutamate + ADP + phosphate + H(+)</text>
        <dbReference type="Rhea" id="RHEA:17521"/>
        <dbReference type="Rhea" id="RHEA-COMP:9681"/>
        <dbReference type="Rhea" id="RHEA-COMP:9684"/>
        <dbReference type="ChEBI" id="CHEBI:15377"/>
        <dbReference type="ChEBI" id="CHEBI:15378"/>
        <dbReference type="ChEBI" id="CHEBI:29985"/>
        <dbReference type="ChEBI" id="CHEBI:30616"/>
        <dbReference type="ChEBI" id="CHEBI:43474"/>
        <dbReference type="ChEBI" id="CHEBI:58359"/>
        <dbReference type="ChEBI" id="CHEBI:78520"/>
        <dbReference type="ChEBI" id="CHEBI:78521"/>
        <dbReference type="ChEBI" id="CHEBI:456216"/>
    </reaction>
</comment>
<comment type="catalytic activity">
    <reaction evidence="1">
        <text>L-aspartyl-tRNA(Asn) + L-glutamine + ATP + H2O = L-asparaginyl-tRNA(Asn) + L-glutamate + ADP + phosphate + 2 H(+)</text>
        <dbReference type="Rhea" id="RHEA:14513"/>
        <dbReference type="Rhea" id="RHEA-COMP:9674"/>
        <dbReference type="Rhea" id="RHEA-COMP:9677"/>
        <dbReference type="ChEBI" id="CHEBI:15377"/>
        <dbReference type="ChEBI" id="CHEBI:15378"/>
        <dbReference type="ChEBI" id="CHEBI:29985"/>
        <dbReference type="ChEBI" id="CHEBI:30616"/>
        <dbReference type="ChEBI" id="CHEBI:43474"/>
        <dbReference type="ChEBI" id="CHEBI:58359"/>
        <dbReference type="ChEBI" id="CHEBI:78515"/>
        <dbReference type="ChEBI" id="CHEBI:78516"/>
        <dbReference type="ChEBI" id="CHEBI:456216"/>
    </reaction>
</comment>
<comment type="subunit">
    <text evidence="1">Heterotrimer of A, B and C subunits.</text>
</comment>
<comment type="similarity">
    <text evidence="1">Belongs to the GatC family.</text>
</comment>
<protein>
    <recommendedName>
        <fullName evidence="1">Aspartyl/glutamyl-tRNA(Asn/Gln) amidotransferase subunit C</fullName>
        <shortName evidence="1">Asp/Glu-ADT subunit C</shortName>
        <ecNumber evidence="1">6.3.5.-</ecNumber>
    </recommendedName>
</protein>
<name>GATC_RHOPA</name>
<dbReference type="EC" id="6.3.5.-" evidence="1"/>
<dbReference type="EMBL" id="BX572603">
    <property type="protein sequence ID" value="CAE28552.1"/>
    <property type="molecule type" value="Genomic_DNA"/>
</dbReference>
<dbReference type="RefSeq" id="WP_011158656.1">
    <property type="nucleotide sequence ID" value="NZ_CP116810.1"/>
</dbReference>
<dbReference type="SMR" id="Q6N571"/>
<dbReference type="STRING" id="258594.RPA3111"/>
<dbReference type="GeneID" id="66894193"/>
<dbReference type="eggNOG" id="COG0721">
    <property type="taxonomic scope" value="Bacteria"/>
</dbReference>
<dbReference type="HOGENOM" id="CLU_105899_2_0_5"/>
<dbReference type="PhylomeDB" id="Q6N571"/>
<dbReference type="GO" id="GO:0050566">
    <property type="term" value="F:asparaginyl-tRNA synthase (glutamine-hydrolyzing) activity"/>
    <property type="evidence" value="ECO:0007669"/>
    <property type="project" value="RHEA"/>
</dbReference>
<dbReference type="GO" id="GO:0005524">
    <property type="term" value="F:ATP binding"/>
    <property type="evidence" value="ECO:0007669"/>
    <property type="project" value="UniProtKB-KW"/>
</dbReference>
<dbReference type="GO" id="GO:0050567">
    <property type="term" value="F:glutaminyl-tRNA synthase (glutamine-hydrolyzing) activity"/>
    <property type="evidence" value="ECO:0007669"/>
    <property type="project" value="UniProtKB-UniRule"/>
</dbReference>
<dbReference type="GO" id="GO:0070681">
    <property type="term" value="P:glutaminyl-tRNAGln biosynthesis via transamidation"/>
    <property type="evidence" value="ECO:0007669"/>
    <property type="project" value="TreeGrafter"/>
</dbReference>
<dbReference type="GO" id="GO:0006450">
    <property type="term" value="P:regulation of translational fidelity"/>
    <property type="evidence" value="ECO:0007669"/>
    <property type="project" value="InterPro"/>
</dbReference>
<dbReference type="GO" id="GO:0006412">
    <property type="term" value="P:translation"/>
    <property type="evidence" value="ECO:0007669"/>
    <property type="project" value="UniProtKB-UniRule"/>
</dbReference>
<dbReference type="Gene3D" id="1.10.20.60">
    <property type="entry name" value="Glu-tRNAGln amidotransferase C subunit, N-terminal domain"/>
    <property type="match status" value="1"/>
</dbReference>
<dbReference type="HAMAP" id="MF_00122">
    <property type="entry name" value="GatC"/>
    <property type="match status" value="1"/>
</dbReference>
<dbReference type="InterPro" id="IPR036113">
    <property type="entry name" value="Asp/Glu-ADT_sf_sub_c"/>
</dbReference>
<dbReference type="InterPro" id="IPR003837">
    <property type="entry name" value="GatC"/>
</dbReference>
<dbReference type="NCBIfam" id="TIGR00135">
    <property type="entry name" value="gatC"/>
    <property type="match status" value="1"/>
</dbReference>
<dbReference type="PANTHER" id="PTHR15004">
    <property type="entry name" value="GLUTAMYL-TRNA(GLN) AMIDOTRANSFERASE SUBUNIT C, MITOCHONDRIAL"/>
    <property type="match status" value="1"/>
</dbReference>
<dbReference type="PANTHER" id="PTHR15004:SF0">
    <property type="entry name" value="GLUTAMYL-TRNA(GLN) AMIDOTRANSFERASE SUBUNIT C, MITOCHONDRIAL"/>
    <property type="match status" value="1"/>
</dbReference>
<dbReference type="Pfam" id="PF02686">
    <property type="entry name" value="GatC"/>
    <property type="match status" value="1"/>
</dbReference>
<dbReference type="SUPFAM" id="SSF141000">
    <property type="entry name" value="Glu-tRNAGln amidotransferase C subunit"/>
    <property type="match status" value="1"/>
</dbReference>
<organism>
    <name type="scientific">Rhodopseudomonas palustris (strain ATCC BAA-98 / CGA009)</name>
    <dbReference type="NCBI Taxonomy" id="258594"/>
    <lineage>
        <taxon>Bacteria</taxon>
        <taxon>Pseudomonadati</taxon>
        <taxon>Pseudomonadota</taxon>
        <taxon>Alphaproteobacteria</taxon>
        <taxon>Hyphomicrobiales</taxon>
        <taxon>Nitrobacteraceae</taxon>
        <taxon>Rhodopseudomonas</taxon>
    </lineage>
</organism>
<reference key="1">
    <citation type="journal article" date="2004" name="Nat. Biotechnol.">
        <title>Complete genome sequence of the metabolically versatile photosynthetic bacterium Rhodopseudomonas palustris.</title>
        <authorList>
            <person name="Larimer F.W."/>
            <person name="Chain P."/>
            <person name="Hauser L."/>
            <person name="Lamerdin J.E."/>
            <person name="Malfatti S."/>
            <person name="Do L."/>
            <person name="Land M.L."/>
            <person name="Pelletier D.A."/>
            <person name="Beatty J.T."/>
            <person name="Lang A.S."/>
            <person name="Tabita F.R."/>
            <person name="Gibson J.L."/>
            <person name="Hanson T.E."/>
            <person name="Bobst C."/>
            <person name="Torres y Torres J.L."/>
            <person name="Peres C."/>
            <person name="Harrison F.H."/>
            <person name="Gibson J."/>
            <person name="Harwood C.S."/>
        </authorList>
    </citation>
    <scope>NUCLEOTIDE SEQUENCE [LARGE SCALE GENOMIC DNA]</scope>
    <source>
        <strain>ATCC BAA-98 / CGA009</strain>
    </source>
</reference>